<organism>
    <name type="scientific">Shigella flexneri</name>
    <dbReference type="NCBI Taxonomy" id="623"/>
    <lineage>
        <taxon>Bacteria</taxon>
        <taxon>Pseudomonadati</taxon>
        <taxon>Pseudomonadota</taxon>
        <taxon>Gammaproteobacteria</taxon>
        <taxon>Enterobacterales</taxon>
        <taxon>Enterobacteriaceae</taxon>
        <taxon>Shigella</taxon>
    </lineage>
</organism>
<reference key="1">
    <citation type="journal article" date="2002" name="Nucleic Acids Res.">
        <title>Genome sequence of Shigella flexneri 2a: insights into pathogenicity through comparison with genomes of Escherichia coli K12 and O157.</title>
        <authorList>
            <person name="Jin Q."/>
            <person name="Yuan Z."/>
            <person name="Xu J."/>
            <person name="Wang Y."/>
            <person name="Shen Y."/>
            <person name="Lu W."/>
            <person name="Wang J."/>
            <person name="Liu H."/>
            <person name="Yang J."/>
            <person name="Yang F."/>
            <person name="Zhang X."/>
            <person name="Zhang J."/>
            <person name="Yang G."/>
            <person name="Wu H."/>
            <person name="Qu D."/>
            <person name="Dong J."/>
            <person name="Sun L."/>
            <person name="Xue Y."/>
            <person name="Zhao A."/>
            <person name="Gao Y."/>
            <person name="Zhu J."/>
            <person name="Kan B."/>
            <person name="Ding K."/>
            <person name="Chen S."/>
            <person name="Cheng H."/>
            <person name="Yao Z."/>
            <person name="He B."/>
            <person name="Chen R."/>
            <person name="Ma D."/>
            <person name="Qiang B."/>
            <person name="Wen Y."/>
            <person name="Hou Y."/>
            <person name="Yu J."/>
        </authorList>
    </citation>
    <scope>NUCLEOTIDE SEQUENCE [LARGE SCALE GENOMIC DNA]</scope>
    <source>
        <strain>301 / Serotype 2a</strain>
    </source>
</reference>
<reference key="2">
    <citation type="journal article" date="2003" name="Infect. Immun.">
        <title>Complete genome sequence and comparative genomics of Shigella flexneri serotype 2a strain 2457T.</title>
        <authorList>
            <person name="Wei J."/>
            <person name="Goldberg M.B."/>
            <person name="Burland V."/>
            <person name="Venkatesan M.M."/>
            <person name="Deng W."/>
            <person name="Fournier G."/>
            <person name="Mayhew G.F."/>
            <person name="Plunkett G. III"/>
            <person name="Rose D.J."/>
            <person name="Darling A."/>
            <person name="Mau B."/>
            <person name="Perna N.T."/>
            <person name="Payne S.M."/>
            <person name="Runyen-Janecky L.J."/>
            <person name="Zhou S."/>
            <person name="Schwartz D.C."/>
            <person name="Blattner F.R."/>
        </authorList>
    </citation>
    <scope>NUCLEOTIDE SEQUENCE [LARGE SCALE GENOMIC DNA]</scope>
    <source>
        <strain>ATCC 700930 / 2457T / Serotype 2a</strain>
    </source>
</reference>
<dbReference type="EMBL" id="AE005674">
    <property type="protein sequence ID" value="AAN44097.1"/>
    <property type="molecule type" value="Genomic_DNA"/>
</dbReference>
<dbReference type="EMBL" id="AE014073">
    <property type="protein sequence ID" value="AAP17921.1"/>
    <property type="molecule type" value="Genomic_DNA"/>
</dbReference>
<dbReference type="RefSeq" id="NP_708390.1">
    <property type="nucleotide sequence ID" value="NC_004337.2"/>
</dbReference>
<dbReference type="RefSeq" id="WP_000717694.1">
    <property type="nucleotide sequence ID" value="NZ_WPGW01000021.1"/>
</dbReference>
<dbReference type="SMR" id="P0A9Z6"/>
<dbReference type="STRING" id="198214.SF2600"/>
<dbReference type="PaxDb" id="198214-SF2600"/>
<dbReference type="GeneID" id="1025665"/>
<dbReference type="GeneID" id="93774582"/>
<dbReference type="KEGG" id="sfl:SF2600"/>
<dbReference type="KEGG" id="sfx:S2772"/>
<dbReference type="PATRIC" id="fig|198214.7.peg.3105"/>
<dbReference type="HOGENOM" id="CLU_082268_0_0_6"/>
<dbReference type="Proteomes" id="UP000001006">
    <property type="component" value="Chromosome"/>
</dbReference>
<dbReference type="Proteomes" id="UP000002673">
    <property type="component" value="Chromosome"/>
</dbReference>
<dbReference type="GO" id="GO:0005829">
    <property type="term" value="C:cytosol"/>
    <property type="evidence" value="ECO:0007669"/>
    <property type="project" value="TreeGrafter"/>
</dbReference>
<dbReference type="GO" id="GO:0005524">
    <property type="term" value="F:ATP binding"/>
    <property type="evidence" value="ECO:0007669"/>
    <property type="project" value="TreeGrafter"/>
</dbReference>
<dbReference type="GO" id="GO:0030234">
    <property type="term" value="F:enzyme regulator activity"/>
    <property type="evidence" value="ECO:0007669"/>
    <property type="project" value="InterPro"/>
</dbReference>
<dbReference type="GO" id="GO:0006808">
    <property type="term" value="P:regulation of nitrogen utilization"/>
    <property type="evidence" value="ECO:0007669"/>
    <property type="project" value="InterPro"/>
</dbReference>
<dbReference type="FunFam" id="3.30.70.120:FF:000001">
    <property type="entry name" value="Nitrogen regulatory protein P-II"/>
    <property type="match status" value="1"/>
</dbReference>
<dbReference type="Gene3D" id="3.30.70.120">
    <property type="match status" value="1"/>
</dbReference>
<dbReference type="InterPro" id="IPR002187">
    <property type="entry name" value="N-reg_PII"/>
</dbReference>
<dbReference type="InterPro" id="IPR011322">
    <property type="entry name" value="N-reg_PII-like_a/b"/>
</dbReference>
<dbReference type="InterPro" id="IPR015867">
    <property type="entry name" value="N-reg_PII/ATP_PRibTrfase_C"/>
</dbReference>
<dbReference type="InterPro" id="IPR017918">
    <property type="entry name" value="N-reg_PII_CS"/>
</dbReference>
<dbReference type="InterPro" id="IPR002332">
    <property type="entry name" value="N-reg_PII_urydylation_site"/>
</dbReference>
<dbReference type="NCBIfam" id="NF008111">
    <property type="entry name" value="PRK10858.1"/>
    <property type="match status" value="1"/>
</dbReference>
<dbReference type="PANTHER" id="PTHR30115">
    <property type="entry name" value="NITROGEN REGULATORY PROTEIN P-II"/>
    <property type="match status" value="1"/>
</dbReference>
<dbReference type="PANTHER" id="PTHR30115:SF11">
    <property type="entry name" value="NITROGEN REGULATORY PROTEIN P-II HOMOLOG"/>
    <property type="match status" value="1"/>
</dbReference>
<dbReference type="Pfam" id="PF00543">
    <property type="entry name" value="P-II"/>
    <property type="match status" value="1"/>
</dbReference>
<dbReference type="PIRSF" id="PIRSF039144">
    <property type="entry name" value="GlnB"/>
    <property type="match status" value="1"/>
</dbReference>
<dbReference type="PRINTS" id="PR00340">
    <property type="entry name" value="PIIGLNB"/>
</dbReference>
<dbReference type="SMART" id="SM00938">
    <property type="entry name" value="P-II"/>
    <property type="match status" value="1"/>
</dbReference>
<dbReference type="SUPFAM" id="SSF54913">
    <property type="entry name" value="GlnB-like"/>
    <property type="match status" value="1"/>
</dbReference>
<dbReference type="PROSITE" id="PS00638">
    <property type="entry name" value="PII_GLNB_CTER"/>
    <property type="match status" value="1"/>
</dbReference>
<dbReference type="PROSITE" id="PS51343">
    <property type="entry name" value="PII_GLNB_DOM"/>
    <property type="match status" value="1"/>
</dbReference>
<dbReference type="PROSITE" id="PS00496">
    <property type="entry name" value="PII_GLNB_UMP"/>
    <property type="match status" value="1"/>
</dbReference>
<name>GLNB_SHIFL</name>
<sequence>MKKIDAIIKPFKLDDVREALAEVGITGMTVTEVKGFGRQKGHTELYRGAEYMVDFLPKVKIEIVVPDDIVDTCVDTIIRTAQTGKIGDGKIFVFDVARVIRIRTGEEDDAAI</sequence>
<protein>
    <recommendedName>
        <fullName>Nitrogen regulatory protein P-II 1</fullName>
    </recommendedName>
</protein>
<evidence type="ECO:0000250" key="1"/>
<evidence type="ECO:0000255" key="2">
    <source>
        <dbReference type="PROSITE-ProRule" id="PRU00675"/>
    </source>
</evidence>
<accession>P0A9Z6</accession>
<accession>P05826</accession>
<comment type="function">
    <text evidence="1">P-II indirectly controls the transcription of the glutamine synthetase gene (GlnA). P-II prevents NR-II-catalyzed conversion of NR-I to NR-I-phosphate, the transcriptional activator of GlnA. When P-II is uridylylated to P-II-UMP, these events are reversed. When the ratio of Gln to 2-ketoglutarate decreases, P-II is uridylylated to P-II-UMP, which causes the deadenylation of glutamine synthetase by GlnE, so activating the enzyme (By similarity).</text>
</comment>
<comment type="subunit">
    <text evidence="1">Homotrimer.</text>
</comment>
<comment type="PTM">
    <text evidence="1">Uridylylated/deuridylylated by GlnD.</text>
</comment>
<comment type="similarity">
    <text evidence="2">Belongs to the P(II) protein family.</text>
</comment>
<proteinExistence type="inferred from homology"/>
<feature type="chain" id="PRO_0000139791" description="Nitrogen regulatory protein P-II 1">
    <location>
        <begin position="1"/>
        <end position="112"/>
    </location>
</feature>
<feature type="modified residue" description="O-UMP-tyrosine" evidence="2">
    <location>
        <position position="51"/>
    </location>
</feature>
<keyword id="KW-0547">Nucleotide-binding</keyword>
<keyword id="KW-0597">Phosphoprotein</keyword>
<keyword id="KW-1185">Reference proteome</keyword>
<keyword id="KW-0804">Transcription</keyword>
<keyword id="KW-0805">Transcription regulation</keyword>
<gene>
    <name type="primary">glnB</name>
    <name type="ordered locus">SF2600</name>
    <name type="ordered locus">S2772</name>
</gene>